<dbReference type="EC" id="1.2.1.19" evidence="1"/>
<dbReference type="EC" id="1.2.1.-" evidence="1"/>
<dbReference type="EMBL" id="CP000822">
    <property type="protein sequence ID" value="ABV12611.1"/>
    <property type="molecule type" value="Genomic_DNA"/>
</dbReference>
<dbReference type="RefSeq" id="WP_012132353.1">
    <property type="nucleotide sequence ID" value="NC_009792.1"/>
</dbReference>
<dbReference type="SMR" id="A8AGJ9"/>
<dbReference type="STRING" id="290338.CKO_01478"/>
<dbReference type="GeneID" id="45135552"/>
<dbReference type="KEGG" id="cko:CKO_01478"/>
<dbReference type="HOGENOM" id="CLU_005391_0_0_6"/>
<dbReference type="OrthoDB" id="9812625at2"/>
<dbReference type="UniPathway" id="UPA00188">
    <property type="reaction ID" value="UER00292"/>
</dbReference>
<dbReference type="Proteomes" id="UP000008148">
    <property type="component" value="Chromosome"/>
</dbReference>
<dbReference type="GO" id="GO:0019145">
    <property type="term" value="F:aminobutyraldehyde dehydrogenase (NAD+) activity"/>
    <property type="evidence" value="ECO:0007669"/>
    <property type="project" value="UniProtKB-UniRule"/>
</dbReference>
<dbReference type="GO" id="GO:0051287">
    <property type="term" value="F:NAD binding"/>
    <property type="evidence" value="ECO:0007669"/>
    <property type="project" value="UniProtKB-UniRule"/>
</dbReference>
<dbReference type="GO" id="GO:0019477">
    <property type="term" value="P:L-lysine catabolic process"/>
    <property type="evidence" value="ECO:0007669"/>
    <property type="project" value="UniProtKB-UniRule"/>
</dbReference>
<dbReference type="GO" id="GO:0009447">
    <property type="term" value="P:putrescine catabolic process"/>
    <property type="evidence" value="ECO:0007669"/>
    <property type="project" value="UniProtKB-UniRule"/>
</dbReference>
<dbReference type="CDD" id="cd07092">
    <property type="entry name" value="ALDH_ABALDH-YdcW"/>
    <property type="match status" value="1"/>
</dbReference>
<dbReference type="FunFam" id="3.40.605.10:FF:000001">
    <property type="entry name" value="Aldehyde dehydrogenase 1"/>
    <property type="match status" value="1"/>
</dbReference>
<dbReference type="FunFam" id="3.40.309.10:FF:000010">
    <property type="entry name" value="Gamma-aminobutyraldehyde dehydrogenase"/>
    <property type="match status" value="1"/>
</dbReference>
<dbReference type="Gene3D" id="3.40.605.10">
    <property type="entry name" value="Aldehyde Dehydrogenase, Chain A, domain 1"/>
    <property type="match status" value="1"/>
</dbReference>
<dbReference type="Gene3D" id="3.40.309.10">
    <property type="entry name" value="Aldehyde Dehydrogenase, Chain A, domain 2"/>
    <property type="match status" value="1"/>
</dbReference>
<dbReference type="HAMAP" id="MF_01275">
    <property type="entry name" value="Aldedh_Prr"/>
    <property type="match status" value="1"/>
</dbReference>
<dbReference type="InterPro" id="IPR016161">
    <property type="entry name" value="Ald_DH/histidinol_DH"/>
</dbReference>
<dbReference type="InterPro" id="IPR016163">
    <property type="entry name" value="Ald_DH_C"/>
</dbReference>
<dbReference type="InterPro" id="IPR029510">
    <property type="entry name" value="Ald_DH_CS_GLU"/>
</dbReference>
<dbReference type="InterPro" id="IPR016162">
    <property type="entry name" value="Ald_DH_N"/>
</dbReference>
<dbReference type="InterPro" id="IPR015590">
    <property type="entry name" value="Aldehyde_DH_dom"/>
</dbReference>
<dbReference type="InterPro" id="IPR015657">
    <property type="entry name" value="Aminobutyraldehyde_DH"/>
</dbReference>
<dbReference type="InterPro" id="IPR017749">
    <property type="entry name" value="PatD"/>
</dbReference>
<dbReference type="NCBIfam" id="TIGR03374">
    <property type="entry name" value="ABALDH"/>
    <property type="match status" value="1"/>
</dbReference>
<dbReference type="NCBIfam" id="NF010000">
    <property type="entry name" value="PRK13473.1"/>
    <property type="match status" value="1"/>
</dbReference>
<dbReference type="PANTHER" id="PTHR11699">
    <property type="entry name" value="ALDEHYDE DEHYDROGENASE-RELATED"/>
    <property type="match status" value="1"/>
</dbReference>
<dbReference type="Pfam" id="PF00171">
    <property type="entry name" value="Aldedh"/>
    <property type="match status" value="1"/>
</dbReference>
<dbReference type="SUPFAM" id="SSF53720">
    <property type="entry name" value="ALDH-like"/>
    <property type="match status" value="1"/>
</dbReference>
<dbReference type="PROSITE" id="PS00687">
    <property type="entry name" value="ALDEHYDE_DEHYDR_GLU"/>
    <property type="match status" value="1"/>
</dbReference>
<evidence type="ECO:0000255" key="1">
    <source>
        <dbReference type="HAMAP-Rule" id="MF_01275"/>
    </source>
</evidence>
<name>ABDH_CITK8</name>
<sequence length="474" mass="50950">MPHQLLINGELVSGEGEKQPVYNPATGEVILEIAEASPAQVDAAVRAADRAFAEWGQTTPKARAELLLTLADVIEENAQTFAELESQNCGKPLHCALNDEIPAIVDVFRFFAGAARCLNGLAAGEYLEGHTSMIRRDPVGVVASIAPWNYPLMMAAWKLAPALAAGNCVVIKPSEITPLTALKLAEFAKDIFPPGVLNVLFGRGKTVGDPLTGHEKVRMVSLTGSIATGEHIIQHTAPSIKRTHMELGGKAPVIVFDDADLDAVVEGVRTFGFYNAGQDCTAACRIYAQKGIYDALVEKLGAAVASLKTGSPNDESTELGPLSSQAHLERVTKAVEEAKALGHINVVTGGQKLDGAGYYFAPTLLAGAKQEDAIVQREVFGPVVSMTVFDDEEQVLAWANDTQYGLASSVWTKDVGRAHRLSARLQYGCTWVNTHFMLVSEMPHGGQKRSGYGKDMSLYGLEDYTVIRHIMVKH</sequence>
<comment type="function">
    <text evidence="1">Catalyzes the oxidation 4-aminobutanal (gamma-aminobutyraldehyde) to 4-aminobutanoate (gamma-aminobutyrate or GABA). This is the second step in one of two pathways for putrescine degradation, where putrescine is converted into 4-aminobutanoate via 4-aminobutanal. Also functions as a 5-aminopentanal dehydrogenase in a a L-lysine degradation pathway to succinate that proceeds via cadaverine, glutarate and L-2-hydroxyglutarate.</text>
</comment>
<comment type="catalytic activity">
    <reaction evidence="1">
        <text>4-aminobutanal + NAD(+) + H2O = 4-aminobutanoate + NADH + 2 H(+)</text>
        <dbReference type="Rhea" id="RHEA:19105"/>
        <dbReference type="ChEBI" id="CHEBI:15377"/>
        <dbReference type="ChEBI" id="CHEBI:15378"/>
        <dbReference type="ChEBI" id="CHEBI:57540"/>
        <dbReference type="ChEBI" id="CHEBI:57945"/>
        <dbReference type="ChEBI" id="CHEBI:58264"/>
        <dbReference type="ChEBI" id="CHEBI:59888"/>
        <dbReference type="EC" id="1.2.1.19"/>
    </reaction>
    <physiologicalReaction direction="left-to-right" evidence="1">
        <dbReference type="Rhea" id="RHEA:19106"/>
    </physiologicalReaction>
</comment>
<comment type="catalytic activity">
    <reaction evidence="1">
        <text>5-aminopentanal + NAD(+) + H2O = 5-aminopentanoate + NADH + 2 H(+)</text>
        <dbReference type="Rhea" id="RHEA:61632"/>
        <dbReference type="ChEBI" id="CHEBI:15377"/>
        <dbReference type="ChEBI" id="CHEBI:15378"/>
        <dbReference type="ChEBI" id="CHEBI:57540"/>
        <dbReference type="ChEBI" id="CHEBI:57945"/>
        <dbReference type="ChEBI" id="CHEBI:144896"/>
        <dbReference type="ChEBI" id="CHEBI:356010"/>
    </reaction>
    <physiologicalReaction direction="left-to-right" evidence="1">
        <dbReference type="Rhea" id="RHEA:61633"/>
    </physiologicalReaction>
</comment>
<comment type="pathway">
    <text evidence="1">Amine and polyamine degradation; putrescine degradation; 4-aminobutanoate from 4-aminobutanal: step 1/1.</text>
</comment>
<comment type="pathway">
    <text evidence="1">Amino-acid degradation.</text>
</comment>
<comment type="subunit">
    <text evidence="1">Homotetramer.</text>
</comment>
<comment type="miscellaneous">
    <text evidence="1">4-aminobutanal can spontaneously cyclize to 1-pyrroline, and 5-aminopentanal to 1-piperideine.</text>
</comment>
<comment type="similarity">
    <text evidence="1">Belongs to the aldehyde dehydrogenase family. Gamma-aminobutyraldehyde dehydrogenase subfamily.</text>
</comment>
<protein>
    <recommendedName>
        <fullName evidence="1">Gamma-aminobutyraldehyde dehydrogenase</fullName>
        <shortName evidence="1">ABALDH</shortName>
        <ecNumber evidence="1">1.2.1.19</ecNumber>
    </recommendedName>
    <alternativeName>
        <fullName evidence="1">1-pyrroline dehydrogenase</fullName>
    </alternativeName>
    <alternativeName>
        <fullName evidence="1">4-aminobutanal dehydrogenase</fullName>
    </alternativeName>
    <alternativeName>
        <fullName evidence="1">5-aminopentanal dehydrogenase</fullName>
        <ecNumber evidence="1">1.2.1.-</ecNumber>
    </alternativeName>
</protein>
<proteinExistence type="inferred from homology"/>
<reference key="1">
    <citation type="submission" date="2007-08" db="EMBL/GenBank/DDBJ databases">
        <authorList>
            <consortium name="The Citrobacter koseri Genome Sequencing Project"/>
            <person name="McClelland M."/>
            <person name="Sanderson E.K."/>
            <person name="Porwollik S."/>
            <person name="Spieth J."/>
            <person name="Clifton W.S."/>
            <person name="Latreille P."/>
            <person name="Courtney L."/>
            <person name="Wang C."/>
            <person name="Pepin K."/>
            <person name="Bhonagiri V."/>
            <person name="Nash W."/>
            <person name="Johnson M."/>
            <person name="Thiruvilangam P."/>
            <person name="Wilson R."/>
        </authorList>
    </citation>
    <scope>NUCLEOTIDE SEQUENCE [LARGE SCALE GENOMIC DNA]</scope>
    <source>
        <strain>ATCC BAA-895 / CDC 4225-83 / SGSC4696</strain>
    </source>
</reference>
<keyword id="KW-0520">NAD</keyword>
<keyword id="KW-0560">Oxidoreductase</keyword>
<keyword id="KW-1185">Reference proteome</keyword>
<feature type="chain" id="PRO_1000067390" description="Gamma-aminobutyraldehyde dehydrogenase">
    <location>
        <begin position="1"/>
        <end position="474"/>
    </location>
</feature>
<feature type="active site" evidence="1">
    <location>
        <position position="246"/>
    </location>
</feature>
<feature type="active site" description="Nucleophile" evidence="1">
    <location>
        <position position="280"/>
    </location>
</feature>
<feature type="binding site" evidence="1">
    <location>
        <begin position="146"/>
        <end position="148"/>
    </location>
    <ligand>
        <name>NAD(+)</name>
        <dbReference type="ChEBI" id="CHEBI:57540"/>
    </ligand>
</feature>
<feature type="binding site" evidence="1">
    <location>
        <begin position="172"/>
        <end position="175"/>
    </location>
    <ligand>
        <name>NAD(+)</name>
        <dbReference type="ChEBI" id="CHEBI:57540"/>
    </ligand>
</feature>
<feature type="binding site" evidence="1">
    <location>
        <position position="209"/>
    </location>
    <ligand>
        <name>NAD(+)</name>
        <dbReference type="ChEBI" id="CHEBI:57540"/>
    </ligand>
</feature>
<feature type="binding site" evidence="1">
    <location>
        <begin position="225"/>
        <end position="228"/>
    </location>
    <ligand>
        <name>NAD(+)</name>
        <dbReference type="ChEBI" id="CHEBI:57540"/>
    </ligand>
</feature>
<feature type="binding site" evidence="1">
    <location>
        <position position="280"/>
    </location>
    <ligand>
        <name>NAD(+)</name>
        <dbReference type="ChEBI" id="CHEBI:57540"/>
    </ligand>
</feature>
<organism>
    <name type="scientific">Citrobacter koseri (strain ATCC BAA-895 / CDC 4225-83 / SGSC4696)</name>
    <dbReference type="NCBI Taxonomy" id="290338"/>
    <lineage>
        <taxon>Bacteria</taxon>
        <taxon>Pseudomonadati</taxon>
        <taxon>Pseudomonadota</taxon>
        <taxon>Gammaproteobacteria</taxon>
        <taxon>Enterobacterales</taxon>
        <taxon>Enterobacteriaceae</taxon>
        <taxon>Citrobacter</taxon>
    </lineage>
</organism>
<gene>
    <name evidence="1" type="primary">patD</name>
    <name type="ordered locus">CKO_01478</name>
</gene>
<accession>A8AGJ9</accession>